<comment type="function">
    <text evidence="1">Required for the formation of a threonylcarbamoyl group on adenosine at position 37 (t(6)A37) in tRNAs that read codons beginning with adenine. Is involved in the transfer of the threonylcarbamoyl moiety of threonylcarbamoyl-AMP (TC-AMP) to the N6 group of A37, together with TsaE and TsaB. TsaD likely plays a direct catalytic role in this reaction.</text>
</comment>
<comment type="catalytic activity">
    <reaction evidence="1">
        <text>L-threonylcarbamoyladenylate + adenosine(37) in tRNA = N(6)-L-threonylcarbamoyladenosine(37) in tRNA + AMP + H(+)</text>
        <dbReference type="Rhea" id="RHEA:37059"/>
        <dbReference type="Rhea" id="RHEA-COMP:10162"/>
        <dbReference type="Rhea" id="RHEA-COMP:10163"/>
        <dbReference type="ChEBI" id="CHEBI:15378"/>
        <dbReference type="ChEBI" id="CHEBI:73682"/>
        <dbReference type="ChEBI" id="CHEBI:74411"/>
        <dbReference type="ChEBI" id="CHEBI:74418"/>
        <dbReference type="ChEBI" id="CHEBI:456215"/>
        <dbReference type="EC" id="2.3.1.234"/>
    </reaction>
</comment>
<comment type="cofactor">
    <cofactor evidence="1">
        <name>Fe(2+)</name>
        <dbReference type="ChEBI" id="CHEBI:29033"/>
    </cofactor>
    <text evidence="1">Binds 1 Fe(2+) ion per subunit.</text>
</comment>
<comment type="subcellular location">
    <subcellularLocation>
        <location evidence="1">Cytoplasm</location>
    </subcellularLocation>
</comment>
<comment type="similarity">
    <text evidence="1">Belongs to the KAE1 / TsaD family.</text>
</comment>
<proteinExistence type="inferred from homology"/>
<gene>
    <name evidence="1" type="primary">tsaD</name>
    <name type="synonym">gcp</name>
    <name type="ordered locus">RHOS4_00840</name>
    <name type="ORF">RSP_1509</name>
</gene>
<reference key="1">
    <citation type="submission" date="2005-09" db="EMBL/GenBank/DDBJ databases">
        <title>Complete sequence of chromosome 1 of Rhodobacter sphaeroides 2.4.1.</title>
        <authorList>
            <person name="Copeland A."/>
            <person name="Lucas S."/>
            <person name="Lapidus A."/>
            <person name="Barry K."/>
            <person name="Detter J.C."/>
            <person name="Glavina T."/>
            <person name="Hammon N."/>
            <person name="Israni S."/>
            <person name="Pitluck S."/>
            <person name="Richardson P."/>
            <person name="Mackenzie C."/>
            <person name="Choudhary M."/>
            <person name="Larimer F."/>
            <person name="Hauser L.J."/>
            <person name="Land M."/>
            <person name="Donohue T.J."/>
            <person name="Kaplan S."/>
        </authorList>
    </citation>
    <scope>NUCLEOTIDE SEQUENCE [LARGE SCALE GENOMIC DNA]</scope>
    <source>
        <strain>ATCC 17023 / DSM 158 / JCM 6121 / CCUG 31486 / LMG 2827 / NBRC 12203 / NCIMB 8253 / ATH 2.4.1.</strain>
    </source>
</reference>
<evidence type="ECO:0000255" key="1">
    <source>
        <dbReference type="HAMAP-Rule" id="MF_01445"/>
    </source>
</evidence>
<feature type="chain" id="PRO_0000303511" description="tRNA N6-adenosine threonylcarbamoyltransferase">
    <location>
        <begin position="1"/>
        <end position="364"/>
    </location>
</feature>
<feature type="binding site" evidence="1">
    <location>
        <position position="118"/>
    </location>
    <ligand>
        <name>Fe cation</name>
        <dbReference type="ChEBI" id="CHEBI:24875"/>
    </ligand>
</feature>
<feature type="binding site" evidence="1">
    <location>
        <position position="122"/>
    </location>
    <ligand>
        <name>Fe cation</name>
        <dbReference type="ChEBI" id="CHEBI:24875"/>
    </ligand>
</feature>
<feature type="binding site" evidence="1">
    <location>
        <begin position="140"/>
        <end position="144"/>
    </location>
    <ligand>
        <name>substrate</name>
    </ligand>
</feature>
<feature type="binding site" evidence="1">
    <location>
        <position position="173"/>
    </location>
    <ligand>
        <name>substrate</name>
    </ligand>
</feature>
<feature type="binding site" evidence="1">
    <location>
        <position position="186"/>
    </location>
    <ligand>
        <name>substrate</name>
    </ligand>
</feature>
<feature type="binding site" evidence="1">
    <location>
        <position position="288"/>
    </location>
    <ligand>
        <name>substrate</name>
    </ligand>
</feature>
<feature type="binding site" evidence="1">
    <location>
        <position position="316"/>
    </location>
    <ligand>
        <name>Fe cation</name>
        <dbReference type="ChEBI" id="CHEBI:24875"/>
    </ligand>
</feature>
<accession>Q3J6D2</accession>
<dbReference type="EC" id="2.3.1.234" evidence="1"/>
<dbReference type="EMBL" id="CP000143">
    <property type="protein sequence ID" value="ABA77652.1"/>
    <property type="molecule type" value="Genomic_DNA"/>
</dbReference>
<dbReference type="RefSeq" id="WP_011336799.1">
    <property type="nucleotide sequence ID" value="NC_007493.2"/>
</dbReference>
<dbReference type="RefSeq" id="YP_351553.1">
    <property type="nucleotide sequence ID" value="NC_007493.2"/>
</dbReference>
<dbReference type="SMR" id="Q3J6D2"/>
<dbReference type="STRING" id="272943.RSP_1509"/>
<dbReference type="EnsemblBacteria" id="ABA77652">
    <property type="protein sequence ID" value="ABA77652"/>
    <property type="gene ID" value="RSP_1509"/>
</dbReference>
<dbReference type="GeneID" id="3718711"/>
<dbReference type="KEGG" id="rsp:RSP_1509"/>
<dbReference type="PATRIC" id="fig|272943.9.peg.381"/>
<dbReference type="eggNOG" id="COG0533">
    <property type="taxonomic scope" value="Bacteria"/>
</dbReference>
<dbReference type="OrthoDB" id="9806197at2"/>
<dbReference type="PhylomeDB" id="Q3J6D2"/>
<dbReference type="Proteomes" id="UP000002703">
    <property type="component" value="Chromosome 1"/>
</dbReference>
<dbReference type="GO" id="GO:0005737">
    <property type="term" value="C:cytoplasm"/>
    <property type="evidence" value="ECO:0007669"/>
    <property type="project" value="UniProtKB-SubCell"/>
</dbReference>
<dbReference type="GO" id="GO:0005506">
    <property type="term" value="F:iron ion binding"/>
    <property type="evidence" value="ECO:0007669"/>
    <property type="project" value="UniProtKB-UniRule"/>
</dbReference>
<dbReference type="GO" id="GO:0061711">
    <property type="term" value="F:N(6)-L-threonylcarbamoyladenine synthase activity"/>
    <property type="evidence" value="ECO:0007669"/>
    <property type="project" value="UniProtKB-EC"/>
</dbReference>
<dbReference type="GO" id="GO:0002949">
    <property type="term" value="P:tRNA threonylcarbamoyladenosine modification"/>
    <property type="evidence" value="ECO:0007669"/>
    <property type="project" value="UniProtKB-UniRule"/>
</dbReference>
<dbReference type="CDD" id="cd24133">
    <property type="entry name" value="ASKHA_NBD_TsaD_bac"/>
    <property type="match status" value="1"/>
</dbReference>
<dbReference type="FunFam" id="3.30.420.40:FF:000012">
    <property type="entry name" value="tRNA N6-adenosine threonylcarbamoyltransferase"/>
    <property type="match status" value="1"/>
</dbReference>
<dbReference type="Gene3D" id="3.30.420.40">
    <property type="match status" value="2"/>
</dbReference>
<dbReference type="HAMAP" id="MF_01445">
    <property type="entry name" value="TsaD"/>
    <property type="match status" value="1"/>
</dbReference>
<dbReference type="InterPro" id="IPR043129">
    <property type="entry name" value="ATPase_NBD"/>
</dbReference>
<dbReference type="InterPro" id="IPR000905">
    <property type="entry name" value="Gcp-like_dom"/>
</dbReference>
<dbReference type="InterPro" id="IPR017861">
    <property type="entry name" value="KAE1/TsaD"/>
</dbReference>
<dbReference type="InterPro" id="IPR022450">
    <property type="entry name" value="TsaD"/>
</dbReference>
<dbReference type="NCBIfam" id="TIGR00329">
    <property type="entry name" value="gcp_kae1"/>
    <property type="match status" value="1"/>
</dbReference>
<dbReference type="NCBIfam" id="TIGR03723">
    <property type="entry name" value="T6A_TsaD_YgjD"/>
    <property type="match status" value="1"/>
</dbReference>
<dbReference type="PANTHER" id="PTHR11735">
    <property type="entry name" value="TRNA N6-ADENOSINE THREONYLCARBAMOYLTRANSFERASE"/>
    <property type="match status" value="1"/>
</dbReference>
<dbReference type="PANTHER" id="PTHR11735:SF6">
    <property type="entry name" value="TRNA N6-ADENOSINE THREONYLCARBAMOYLTRANSFERASE, MITOCHONDRIAL"/>
    <property type="match status" value="1"/>
</dbReference>
<dbReference type="Pfam" id="PF00814">
    <property type="entry name" value="TsaD"/>
    <property type="match status" value="1"/>
</dbReference>
<dbReference type="PRINTS" id="PR00789">
    <property type="entry name" value="OSIALOPTASE"/>
</dbReference>
<dbReference type="SUPFAM" id="SSF53067">
    <property type="entry name" value="Actin-like ATPase domain"/>
    <property type="match status" value="2"/>
</dbReference>
<organism>
    <name type="scientific">Cereibacter sphaeroides (strain ATCC 17023 / DSM 158 / JCM 6121 / CCUG 31486 / LMG 2827 / NBRC 12203 / NCIMB 8253 / ATH 2.4.1.)</name>
    <name type="common">Rhodobacter sphaeroides</name>
    <dbReference type="NCBI Taxonomy" id="272943"/>
    <lineage>
        <taxon>Bacteria</taxon>
        <taxon>Pseudomonadati</taxon>
        <taxon>Pseudomonadota</taxon>
        <taxon>Alphaproteobacteria</taxon>
        <taxon>Rhodobacterales</taxon>
        <taxon>Paracoccaceae</taxon>
        <taxon>Cereibacter</taxon>
    </lineage>
</organism>
<name>TSAD_CERS4</name>
<protein>
    <recommendedName>
        <fullName evidence="1">tRNA N6-adenosine threonylcarbamoyltransferase</fullName>
        <ecNumber evidence="1">2.3.1.234</ecNumber>
    </recommendedName>
    <alternativeName>
        <fullName evidence="1">N6-L-threonylcarbamoyladenine synthase</fullName>
        <shortName evidence="1">t(6)A synthase</shortName>
    </alternativeName>
    <alternativeName>
        <fullName evidence="1">t(6)A37 threonylcarbamoyladenosine biosynthesis protein TsaD</fullName>
    </alternativeName>
    <alternativeName>
        <fullName evidence="1">tRNA threonylcarbamoyladenosine biosynthesis protein TsaD</fullName>
    </alternativeName>
</protein>
<sequence length="364" mass="37219">MSRPLTFLGIESSCDDTAAAVVRAEGTRAEILSSVVDGQTALHAAFGGVVPEIAARAHAERLDLCVERALEEAGLGLRDLDGIAVTAGPGLIGGVLSGVMLAKGLAAGTGLPLVGVNHLAGHALTPRLTDGLAFPYLMLLVSGGHCQFLIARGAEEFSRLGGSIDDAPGEAFDKTAKLLGLPQPGGPSVEAEAAAGDPRRFAFPRPMLDRPGCDMSFSGLKTALLRARDGLVAEKGGLTRADRADLCAGFQAAVVEVLAEKTRRALAVYAAEGAAEPALAVAGGVAANGPIRAALTRVAEAAGVRFLAPPLRLCTDNAAMIAWAGIERFRAGGRDGMELSARPRWPLDRSAPALIGSGRKGAKA</sequence>
<keyword id="KW-0012">Acyltransferase</keyword>
<keyword id="KW-0963">Cytoplasm</keyword>
<keyword id="KW-0408">Iron</keyword>
<keyword id="KW-0479">Metal-binding</keyword>
<keyword id="KW-1185">Reference proteome</keyword>
<keyword id="KW-0808">Transferase</keyword>
<keyword id="KW-0819">tRNA processing</keyword>